<accession>B7N3X6</accession>
<name>YMGG_ECOLU</name>
<organism>
    <name type="scientific">Escherichia coli O17:K52:H18 (strain UMN026 / ExPEC)</name>
    <dbReference type="NCBI Taxonomy" id="585056"/>
    <lineage>
        <taxon>Bacteria</taxon>
        <taxon>Pseudomonadati</taxon>
        <taxon>Pseudomonadota</taxon>
        <taxon>Gammaproteobacteria</taxon>
        <taxon>Enterobacterales</taxon>
        <taxon>Enterobacteriaceae</taxon>
        <taxon>Escherichia</taxon>
    </lineage>
</organism>
<proteinExistence type="inferred from homology"/>
<feature type="chain" id="PRO_0000388956" description="UPF0757 protein YmgG">
    <location>
        <begin position="1"/>
        <end position="114"/>
    </location>
</feature>
<reference key="1">
    <citation type="journal article" date="2009" name="PLoS Genet.">
        <title>Organised genome dynamics in the Escherichia coli species results in highly diverse adaptive paths.</title>
        <authorList>
            <person name="Touchon M."/>
            <person name="Hoede C."/>
            <person name="Tenaillon O."/>
            <person name="Barbe V."/>
            <person name="Baeriswyl S."/>
            <person name="Bidet P."/>
            <person name="Bingen E."/>
            <person name="Bonacorsi S."/>
            <person name="Bouchier C."/>
            <person name="Bouvet O."/>
            <person name="Calteau A."/>
            <person name="Chiapello H."/>
            <person name="Clermont O."/>
            <person name="Cruveiller S."/>
            <person name="Danchin A."/>
            <person name="Diard M."/>
            <person name="Dossat C."/>
            <person name="Karoui M.E."/>
            <person name="Frapy E."/>
            <person name="Garry L."/>
            <person name="Ghigo J.M."/>
            <person name="Gilles A.M."/>
            <person name="Johnson J."/>
            <person name="Le Bouguenec C."/>
            <person name="Lescat M."/>
            <person name="Mangenot S."/>
            <person name="Martinez-Jehanne V."/>
            <person name="Matic I."/>
            <person name="Nassif X."/>
            <person name="Oztas S."/>
            <person name="Petit M.A."/>
            <person name="Pichon C."/>
            <person name="Rouy Z."/>
            <person name="Ruf C.S."/>
            <person name="Schneider D."/>
            <person name="Tourret J."/>
            <person name="Vacherie B."/>
            <person name="Vallenet D."/>
            <person name="Medigue C."/>
            <person name="Rocha E.P.C."/>
            <person name="Denamur E."/>
        </authorList>
    </citation>
    <scope>NUCLEOTIDE SEQUENCE [LARGE SCALE GENOMIC DNA]</scope>
    <source>
        <strain>UMN026 / ExPEC</strain>
    </source>
</reference>
<dbReference type="EMBL" id="CU928163">
    <property type="protein sequence ID" value="CAR12669.1"/>
    <property type="status" value="ALT_INIT"/>
    <property type="molecule type" value="Genomic_DNA"/>
</dbReference>
<dbReference type="RefSeq" id="WP_000726974.1">
    <property type="nucleotide sequence ID" value="NC_011751.1"/>
</dbReference>
<dbReference type="STRING" id="585056.ECUMN_1461"/>
<dbReference type="KEGG" id="eum:ECUMN_1461"/>
<dbReference type="PATRIC" id="fig|585056.7.peg.1655"/>
<dbReference type="HOGENOM" id="CLU_164687_0_0_6"/>
<dbReference type="Proteomes" id="UP000007097">
    <property type="component" value="Chromosome"/>
</dbReference>
<dbReference type="HAMAP" id="MF_01455">
    <property type="entry name" value="UPF0757"/>
    <property type="match status" value="1"/>
</dbReference>
<dbReference type="InterPro" id="IPR025693">
    <property type="entry name" value="Gly-zipper_OmpA-like_dom"/>
</dbReference>
<dbReference type="InterPro" id="IPR027367">
    <property type="entry name" value="Gly-zipper_YMGG"/>
</dbReference>
<dbReference type="InterPro" id="IPR022833">
    <property type="entry name" value="UPF0757_YmgG"/>
</dbReference>
<dbReference type="Pfam" id="PF13436">
    <property type="entry name" value="Gly-zipper_OmpA"/>
    <property type="match status" value="1"/>
</dbReference>
<dbReference type="Pfam" id="PF13441">
    <property type="entry name" value="Gly-zipper_YMGG"/>
    <property type="match status" value="1"/>
</dbReference>
<protein>
    <recommendedName>
        <fullName evidence="1">UPF0757 protein YmgG</fullName>
    </recommendedName>
</protein>
<comment type="similarity">
    <text evidence="1">Belongs to the UPF0757 family.</text>
</comment>
<comment type="sequence caution" evidence="2">
    <conflict type="erroneous initiation">
        <sequence resource="EMBL-CDS" id="CAR12669"/>
    </conflict>
</comment>
<sequence>MKKKILAFGLISALFCSTPAMADMNRTTKGALLGAGVGLLTGNGVNGVLKGAAVGAGVGAVTEKGRDGKNARKGAKVGAAVGAVTGVLTGNGLEGAIKGAVIGGTGGAILGKMK</sequence>
<gene>
    <name evidence="1" type="primary">ymgG</name>
    <name type="ordered locus">ECUMN_1461</name>
</gene>
<evidence type="ECO:0000255" key="1">
    <source>
        <dbReference type="HAMAP-Rule" id="MF_01455"/>
    </source>
</evidence>
<evidence type="ECO:0000305" key="2"/>